<gene>
    <name evidence="6" type="primary">ldp-1</name>
    <name evidence="6" type="ORF">F22F7.1</name>
</gene>
<organism evidence="5">
    <name type="scientific">Caenorhabditis elegans</name>
    <dbReference type="NCBI Taxonomy" id="6239"/>
    <lineage>
        <taxon>Eukaryota</taxon>
        <taxon>Metazoa</taxon>
        <taxon>Ecdysozoa</taxon>
        <taxon>Nematoda</taxon>
        <taxon>Chromadorea</taxon>
        <taxon>Rhabditida</taxon>
        <taxon>Rhabditina</taxon>
        <taxon>Rhabditomorpha</taxon>
        <taxon>Rhabditoidea</taxon>
        <taxon>Rhabditidae</taxon>
        <taxon>Peloderinae</taxon>
        <taxon>Caenorhabditis</taxon>
    </lineage>
</organism>
<name>LDP1_CAEEL</name>
<accession>Q9GZE9</accession>
<accession>Q8IA58</accession>
<proteinExistence type="evidence at protein level"/>
<protein>
    <recommendedName>
        <fullName evidence="6">Lipid droplet localized protein</fullName>
    </recommendedName>
</protein>
<reference evidence="5" key="1">
    <citation type="journal article" date="1998" name="Science">
        <title>Genome sequence of the nematode C. elegans: a platform for investigating biology.</title>
        <authorList>
            <consortium name="The C. elegans sequencing consortium"/>
        </authorList>
    </citation>
    <scope>NUCLEOTIDE SEQUENCE [LARGE SCALE GENOMIC DNA]</scope>
    <source>
        <strain evidence="5">Bristol N2</strain>
    </source>
</reference>
<reference evidence="4" key="2">
    <citation type="journal article" date="2015" name="Biochim. Biophys. Acta">
        <title>Lipidomic and proteomic analysis of Caenorhabditis elegans lipid droplets and identification of ACS-4 as a lipid droplet-associated protein.</title>
        <authorList>
            <person name="Vrablik T.L."/>
            <person name="Petyuk V.A."/>
            <person name="Larson E.M."/>
            <person name="Smith R.D."/>
            <person name="Watts J.L."/>
        </authorList>
    </citation>
    <scope>IDENTIFICATION BY MASS SPECTROMETRY</scope>
    <scope>SUBCELLULAR LOCATION</scope>
</reference>
<reference evidence="4" key="3">
    <citation type="journal article" date="2015" name="Biochim. Biophys. Acta">
        <title>Identification of lipid droplet structure-like/resident proteins in Caenorhabditis elegans.</title>
        <authorList>
            <person name="Na H."/>
            <person name="Zhang P."/>
            <person name="Chen Y."/>
            <person name="Zhu X."/>
            <person name="Liu Y."/>
            <person name="Liu Y."/>
            <person name="Xie K."/>
            <person name="Xu N."/>
            <person name="Yang F."/>
            <person name="Yu Y."/>
            <person name="Cichello S."/>
            <person name="Mak H.Y."/>
            <person name="Wang M.C."/>
            <person name="Zhang H."/>
            <person name="Liu P."/>
        </authorList>
    </citation>
    <scope>IDENTIFICATION BY MASS SPECTROMETRY</scope>
    <scope>SUBCELLULAR LOCATION</scope>
</reference>
<evidence type="ECO:0000255" key="1"/>
<evidence type="ECO:0000269" key="2">
    <source>
    </source>
</evidence>
<evidence type="ECO:0000269" key="3">
    <source>
    </source>
</evidence>
<evidence type="ECO:0000305" key="4"/>
<evidence type="ECO:0000312" key="5">
    <source>
        <dbReference type="Proteomes" id="UP000001940"/>
    </source>
</evidence>
<evidence type="ECO:0000312" key="6">
    <source>
        <dbReference type="WormBase" id="F22F7.1a"/>
    </source>
</evidence>
<evidence type="ECO:0000312" key="7">
    <source>
        <dbReference type="WormBase" id="F22F7.1b"/>
    </source>
</evidence>
<keyword id="KW-0025">Alternative splicing</keyword>
<keyword id="KW-0551">Lipid droplet</keyword>
<keyword id="KW-0472">Membrane</keyword>
<keyword id="KW-1185">Reference proteome</keyword>
<keyword id="KW-0812">Transmembrane</keyword>
<keyword id="KW-1133">Transmembrane helix</keyword>
<sequence length="426" mass="47294">MSRYDVVVYGASGFTGAYVVEYLVNSEQFEGLSFAVAGRSEKKLREVLRNISQKTGKDVSNAAVIVADSADERSLNEMARQANVVINAVGPYRLYGEAVVKAAVENGASHVDISGEPAWIEKMQQKYSKQAKEQGVYVVSACGWDSIPADLGVNFLKKNFHGDLNHVESFVQLLTGPSGYSFNAGTYQTLILGLSGAATDKLGAVRKEIMPEKIVRGAVKLPKRPTLWEIKEKELNGVAVPFPGADKSIINRSQYYDATSRQVRPIHMETYIRLSSQFYGYLIGLWIMFLSIFVKYPFTRRILQQYPDQCSFYMFKNSGPSARQMAEASFVYWFFGYGYKETLPLDQQHEGKINRKVLATCKGPDAGYIATSGCVLSAALTLIRDKDNLPKDGGVYTTAAAFGNSKIYDYLASFGITYQLESEYDL</sequence>
<comment type="subcellular location">
    <subcellularLocation>
        <location evidence="1">Membrane</location>
        <topology evidence="1">Single-pass membrane protein</topology>
    </subcellularLocation>
    <subcellularLocation>
        <location evidence="2 3">Lipid droplet</location>
    </subcellularLocation>
</comment>
<comment type="alternative products">
    <event type="alternative splicing"/>
    <isoform>
        <id>Q9GZE9-1</id>
        <name evidence="6">a</name>
        <sequence type="displayed"/>
    </isoform>
    <isoform>
        <id>Q9GZE9-2</id>
        <name evidence="7">b</name>
        <sequence type="described" ref="VSP_059216"/>
    </isoform>
</comment>
<comment type="similarity">
    <text evidence="4">Belongs to the saccharopine dehydrogenase family.</text>
</comment>
<dbReference type="EMBL" id="BX284605">
    <property type="protein sequence ID" value="CCD67439.1"/>
    <property type="molecule type" value="Genomic_DNA"/>
</dbReference>
<dbReference type="EMBL" id="BX284605">
    <property type="protein sequence ID" value="CCD67440.2"/>
    <property type="molecule type" value="Genomic_DNA"/>
</dbReference>
<dbReference type="PIR" id="T33187">
    <property type="entry name" value="T33187"/>
</dbReference>
<dbReference type="RefSeq" id="NP_001379806.1">
    <molecule id="Q9GZE9-1"/>
    <property type="nucleotide sequence ID" value="NM_001392486.1"/>
</dbReference>
<dbReference type="RefSeq" id="NP_503577.1">
    <property type="nucleotide sequence ID" value="NM_071176.4"/>
</dbReference>
<dbReference type="RefSeq" id="NP_872194.2">
    <molecule id="Q9GZE9-2"/>
    <property type="nucleotide sequence ID" value="NM_182394.7"/>
</dbReference>
<dbReference type="DIP" id="DIP-26138N"/>
<dbReference type="FunCoup" id="Q9GZE9">
    <property type="interactions" value="1210"/>
</dbReference>
<dbReference type="STRING" id="6239.F22F7.1a.1"/>
<dbReference type="PaxDb" id="6239-F22F7.1a"/>
<dbReference type="PeptideAtlas" id="Q9GZE9"/>
<dbReference type="EnsemblMetazoa" id="F22F7.1a.1">
    <molecule id="Q9GZE9-1"/>
    <property type="protein sequence ID" value="F22F7.1a.1"/>
    <property type="gene ID" value="WBGene00017719"/>
</dbReference>
<dbReference type="EnsemblMetazoa" id="F22F7.1b.1">
    <molecule id="Q9GZE9-2"/>
    <property type="protein sequence ID" value="F22F7.1b.1"/>
    <property type="gene ID" value="WBGene00017719"/>
</dbReference>
<dbReference type="GeneID" id="178692"/>
<dbReference type="KEGG" id="cel:CELE_F22F7.1"/>
<dbReference type="UCSC" id="F22F7.1a.1">
    <property type="organism name" value="c. elegans"/>
</dbReference>
<dbReference type="AGR" id="WB:WBGene00017719"/>
<dbReference type="CTD" id="178692"/>
<dbReference type="WormBase" id="F22F7.1a">
    <molecule id="Q9GZE9-1"/>
    <property type="protein sequence ID" value="CE17691"/>
    <property type="gene ID" value="WBGene00017719"/>
    <property type="gene designation" value="ldp-1"/>
</dbReference>
<dbReference type="WormBase" id="F22F7.1b">
    <molecule id="Q9GZE9-2"/>
    <property type="protein sequence ID" value="CE51032"/>
    <property type="gene ID" value="WBGene00017719"/>
    <property type="gene designation" value="ldp-1"/>
</dbReference>
<dbReference type="eggNOG" id="KOG2733">
    <property type="taxonomic scope" value="Eukaryota"/>
</dbReference>
<dbReference type="GeneTree" id="ENSGT00390000004799"/>
<dbReference type="InParanoid" id="Q9GZE9"/>
<dbReference type="OMA" id="KRPVQMH"/>
<dbReference type="OrthoDB" id="10268090at2759"/>
<dbReference type="PhylomeDB" id="Q9GZE9"/>
<dbReference type="Reactome" id="R-CEL-114608">
    <property type="pathway name" value="Platelet degranulation"/>
</dbReference>
<dbReference type="PRO" id="PR:Q9GZE9"/>
<dbReference type="Proteomes" id="UP000001940">
    <property type="component" value="Chromosome V"/>
</dbReference>
<dbReference type="Bgee" id="WBGene00017719">
    <property type="expression patterns" value="Expressed in larva and 4 other cell types or tissues"/>
</dbReference>
<dbReference type="GO" id="GO:0005811">
    <property type="term" value="C:lipid droplet"/>
    <property type="evidence" value="ECO:0000318"/>
    <property type="project" value="GO_Central"/>
</dbReference>
<dbReference type="GO" id="GO:0016020">
    <property type="term" value="C:membrane"/>
    <property type="evidence" value="ECO:0007669"/>
    <property type="project" value="UniProtKB-SubCell"/>
</dbReference>
<dbReference type="GO" id="GO:0009247">
    <property type="term" value="P:glycolipid biosynthetic process"/>
    <property type="evidence" value="ECO:0000318"/>
    <property type="project" value="GO_Central"/>
</dbReference>
<dbReference type="FunFam" id="3.40.50.720:FF:000178">
    <property type="entry name" value="Saccharopine dehydrogenase-like oxidoreductase"/>
    <property type="match status" value="1"/>
</dbReference>
<dbReference type="Gene3D" id="3.40.50.720">
    <property type="entry name" value="NAD(P)-binding Rossmann-like Domain"/>
    <property type="match status" value="1"/>
</dbReference>
<dbReference type="InterPro" id="IPR036291">
    <property type="entry name" value="NAD(P)-bd_dom_sf"/>
</dbReference>
<dbReference type="InterPro" id="IPR051276">
    <property type="entry name" value="Saccharopine_DH-like_oxidrdct"/>
</dbReference>
<dbReference type="InterPro" id="IPR005097">
    <property type="entry name" value="Sacchrp_dh_NADP-bd"/>
</dbReference>
<dbReference type="PANTHER" id="PTHR12286">
    <property type="entry name" value="SACCHAROPINE DEHYDROGENASE-LIKE OXIDOREDUCTASE"/>
    <property type="match status" value="1"/>
</dbReference>
<dbReference type="PANTHER" id="PTHR12286:SF5">
    <property type="entry name" value="SACCHAROPINE DEHYDROGENASE-LIKE OXIDOREDUCTASE"/>
    <property type="match status" value="1"/>
</dbReference>
<dbReference type="Pfam" id="PF03435">
    <property type="entry name" value="Sacchrp_dh_NADP"/>
    <property type="match status" value="1"/>
</dbReference>
<dbReference type="SUPFAM" id="SSF51735">
    <property type="entry name" value="NAD(P)-binding Rossmann-fold domains"/>
    <property type="match status" value="1"/>
</dbReference>
<feature type="chain" id="PRO_0000442241" description="Lipid droplet localized protein" evidence="4">
    <location>
        <begin position="1"/>
        <end position="426"/>
    </location>
</feature>
<feature type="transmembrane region" description="Helical" evidence="1">
    <location>
        <begin position="278"/>
        <end position="298"/>
    </location>
</feature>
<feature type="splice variant" id="VSP_059216" description="In isoform b." evidence="4">
    <location>
        <begin position="1"/>
        <end position="122"/>
    </location>
</feature>